<organism>
    <name type="scientific">Vesicomyosocius okutanii subsp. Calyptogena okutanii (strain HA)</name>
    <dbReference type="NCBI Taxonomy" id="412965"/>
    <lineage>
        <taxon>Bacteria</taxon>
        <taxon>Pseudomonadati</taxon>
        <taxon>Pseudomonadota</taxon>
        <taxon>Gammaproteobacteria</taxon>
        <taxon>Candidatus Pseudothioglobaceae</taxon>
        <taxon>Candidatus Vesicomyosocius</taxon>
    </lineage>
</organism>
<proteinExistence type="inferred from homology"/>
<protein>
    <recommendedName>
        <fullName evidence="1">Exodeoxyribonuclease 7 small subunit</fullName>
        <ecNumber evidence="1">3.1.11.6</ecNumber>
    </recommendedName>
    <alternativeName>
        <fullName evidence="1">Exodeoxyribonuclease VII small subunit</fullName>
        <shortName evidence="1">Exonuclease VII small subunit</shortName>
    </alternativeName>
</protein>
<sequence>MSEKFNFNQGLIDLEKIVKAMESGDLSLEDSLNHFSKGVELTKQCQSALNKAEQKISMLTEQDNYTNEKPLKRL</sequence>
<gene>
    <name evidence="1" type="primary">xseB</name>
    <name type="ordered locus">COSY_0444</name>
</gene>
<reference key="1">
    <citation type="journal article" date="2007" name="Curr. Biol.">
        <title>Reduced genome of the thioautotrophic intracellular symbiont in a deep-sea clam, Calyptogena okutanii.</title>
        <authorList>
            <person name="Kuwahara H."/>
            <person name="Yoshida T."/>
            <person name="Takaki Y."/>
            <person name="Shimamura S."/>
            <person name="Nishi S."/>
            <person name="Harada M."/>
            <person name="Matsuyama K."/>
            <person name="Takishita K."/>
            <person name="Kawato M."/>
            <person name="Uematsu K."/>
            <person name="Fujiwara Y."/>
            <person name="Sato T."/>
            <person name="Kato C."/>
            <person name="Kitagawa M."/>
            <person name="Kato I."/>
            <person name="Maruyama T."/>
        </authorList>
    </citation>
    <scope>NUCLEOTIDE SEQUENCE [LARGE SCALE GENOMIC DNA]</scope>
    <source>
        <strain>HA</strain>
    </source>
</reference>
<comment type="function">
    <text evidence="1">Bidirectionally degrades single-stranded DNA into large acid-insoluble oligonucleotides, which are then degraded further into small acid-soluble oligonucleotides.</text>
</comment>
<comment type="catalytic activity">
    <reaction evidence="1">
        <text>Exonucleolytic cleavage in either 5'- to 3'- or 3'- to 5'-direction to yield nucleoside 5'-phosphates.</text>
        <dbReference type="EC" id="3.1.11.6"/>
    </reaction>
</comment>
<comment type="subunit">
    <text evidence="1">Heterooligomer composed of large and small subunits.</text>
</comment>
<comment type="subcellular location">
    <subcellularLocation>
        <location evidence="1">Cytoplasm</location>
    </subcellularLocation>
</comment>
<comment type="similarity">
    <text evidence="1">Belongs to the XseB family.</text>
</comment>
<dbReference type="EC" id="3.1.11.6" evidence="1"/>
<dbReference type="EMBL" id="AP009247">
    <property type="protein sequence ID" value="BAF61563.1"/>
    <property type="molecule type" value="Genomic_DNA"/>
</dbReference>
<dbReference type="RefSeq" id="WP_011929833.1">
    <property type="nucleotide sequence ID" value="NC_009465.1"/>
</dbReference>
<dbReference type="SMR" id="A5CWU5"/>
<dbReference type="STRING" id="412965.COSY_0444"/>
<dbReference type="KEGG" id="vok:COSY_0444"/>
<dbReference type="eggNOG" id="COG1722">
    <property type="taxonomic scope" value="Bacteria"/>
</dbReference>
<dbReference type="HOGENOM" id="CLU_145918_3_1_6"/>
<dbReference type="OrthoDB" id="9801128at2"/>
<dbReference type="Proteomes" id="UP000000247">
    <property type="component" value="Chromosome"/>
</dbReference>
<dbReference type="GO" id="GO:0005829">
    <property type="term" value="C:cytosol"/>
    <property type="evidence" value="ECO:0007669"/>
    <property type="project" value="TreeGrafter"/>
</dbReference>
<dbReference type="GO" id="GO:0009318">
    <property type="term" value="C:exodeoxyribonuclease VII complex"/>
    <property type="evidence" value="ECO:0007669"/>
    <property type="project" value="InterPro"/>
</dbReference>
<dbReference type="GO" id="GO:0008855">
    <property type="term" value="F:exodeoxyribonuclease VII activity"/>
    <property type="evidence" value="ECO:0007669"/>
    <property type="project" value="UniProtKB-UniRule"/>
</dbReference>
<dbReference type="GO" id="GO:0006308">
    <property type="term" value="P:DNA catabolic process"/>
    <property type="evidence" value="ECO:0007669"/>
    <property type="project" value="UniProtKB-UniRule"/>
</dbReference>
<dbReference type="Gene3D" id="1.10.287.1040">
    <property type="entry name" value="Exonuclease VII, small subunit"/>
    <property type="match status" value="1"/>
</dbReference>
<dbReference type="HAMAP" id="MF_00337">
    <property type="entry name" value="Exonuc_7_S"/>
    <property type="match status" value="1"/>
</dbReference>
<dbReference type="InterPro" id="IPR003761">
    <property type="entry name" value="Exonuc_VII_S"/>
</dbReference>
<dbReference type="InterPro" id="IPR037004">
    <property type="entry name" value="Exonuc_VII_ssu_sf"/>
</dbReference>
<dbReference type="NCBIfam" id="NF002140">
    <property type="entry name" value="PRK00977.1-4"/>
    <property type="match status" value="1"/>
</dbReference>
<dbReference type="NCBIfam" id="TIGR01280">
    <property type="entry name" value="xseB"/>
    <property type="match status" value="1"/>
</dbReference>
<dbReference type="PANTHER" id="PTHR34137">
    <property type="entry name" value="EXODEOXYRIBONUCLEASE 7 SMALL SUBUNIT"/>
    <property type="match status" value="1"/>
</dbReference>
<dbReference type="PANTHER" id="PTHR34137:SF1">
    <property type="entry name" value="EXODEOXYRIBONUCLEASE 7 SMALL SUBUNIT"/>
    <property type="match status" value="1"/>
</dbReference>
<dbReference type="Pfam" id="PF02609">
    <property type="entry name" value="Exonuc_VII_S"/>
    <property type="match status" value="1"/>
</dbReference>
<dbReference type="PIRSF" id="PIRSF006488">
    <property type="entry name" value="Exonuc_VII_S"/>
    <property type="match status" value="1"/>
</dbReference>
<dbReference type="SUPFAM" id="SSF116842">
    <property type="entry name" value="XseB-like"/>
    <property type="match status" value="1"/>
</dbReference>
<evidence type="ECO:0000255" key="1">
    <source>
        <dbReference type="HAMAP-Rule" id="MF_00337"/>
    </source>
</evidence>
<keyword id="KW-0963">Cytoplasm</keyword>
<keyword id="KW-0269">Exonuclease</keyword>
<keyword id="KW-0378">Hydrolase</keyword>
<keyword id="KW-0540">Nuclease</keyword>
<keyword id="KW-1185">Reference proteome</keyword>
<accession>A5CWU5</accession>
<name>EX7S_VESOH</name>
<feature type="chain" id="PRO_0000303767" description="Exodeoxyribonuclease 7 small subunit">
    <location>
        <begin position="1"/>
        <end position="74"/>
    </location>
</feature>